<evidence type="ECO:0000255" key="1">
    <source>
        <dbReference type="HAMAP-Rule" id="MF_00385"/>
    </source>
</evidence>
<evidence type="ECO:0000305" key="2"/>
<organism>
    <name type="scientific">Acetivibrio thermocellus (strain ATCC 27405 / DSM 1237 / JCM 9322 / NBRC 103400 / NCIMB 10682 / NRRL B-4536 / VPI 7372)</name>
    <name type="common">Clostridium thermocellum</name>
    <dbReference type="NCBI Taxonomy" id="203119"/>
    <lineage>
        <taxon>Bacteria</taxon>
        <taxon>Bacillati</taxon>
        <taxon>Bacillota</taxon>
        <taxon>Clostridia</taxon>
        <taxon>Eubacteriales</taxon>
        <taxon>Oscillospiraceae</taxon>
        <taxon>Acetivibrio</taxon>
    </lineage>
</organism>
<dbReference type="EMBL" id="CP000568">
    <property type="protein sequence ID" value="ABN52004.1"/>
    <property type="molecule type" value="Genomic_DNA"/>
</dbReference>
<dbReference type="RefSeq" id="WP_003516317.1">
    <property type="nucleotide sequence ID" value="NC_009012.1"/>
</dbReference>
<dbReference type="SMR" id="A3DDH5"/>
<dbReference type="STRING" id="203119.Cthe_0769"/>
<dbReference type="GeneID" id="35803889"/>
<dbReference type="KEGG" id="cth:Cthe_0769"/>
<dbReference type="eggNOG" id="COG0228">
    <property type="taxonomic scope" value="Bacteria"/>
</dbReference>
<dbReference type="HOGENOM" id="CLU_100590_5_0_9"/>
<dbReference type="OrthoDB" id="9807878at2"/>
<dbReference type="Proteomes" id="UP000002145">
    <property type="component" value="Chromosome"/>
</dbReference>
<dbReference type="GO" id="GO:0005737">
    <property type="term" value="C:cytoplasm"/>
    <property type="evidence" value="ECO:0007669"/>
    <property type="project" value="UniProtKB-ARBA"/>
</dbReference>
<dbReference type="GO" id="GO:0015935">
    <property type="term" value="C:small ribosomal subunit"/>
    <property type="evidence" value="ECO:0007669"/>
    <property type="project" value="TreeGrafter"/>
</dbReference>
<dbReference type="GO" id="GO:0003735">
    <property type="term" value="F:structural constituent of ribosome"/>
    <property type="evidence" value="ECO:0007669"/>
    <property type="project" value="InterPro"/>
</dbReference>
<dbReference type="GO" id="GO:0006412">
    <property type="term" value="P:translation"/>
    <property type="evidence" value="ECO:0007669"/>
    <property type="project" value="UniProtKB-UniRule"/>
</dbReference>
<dbReference type="FunFam" id="3.30.1320.10:FF:000002">
    <property type="entry name" value="30S ribosomal protein S16"/>
    <property type="match status" value="1"/>
</dbReference>
<dbReference type="Gene3D" id="3.30.1320.10">
    <property type="match status" value="1"/>
</dbReference>
<dbReference type="HAMAP" id="MF_00385">
    <property type="entry name" value="Ribosomal_bS16"/>
    <property type="match status" value="1"/>
</dbReference>
<dbReference type="InterPro" id="IPR000307">
    <property type="entry name" value="Ribosomal_bS16"/>
</dbReference>
<dbReference type="InterPro" id="IPR020592">
    <property type="entry name" value="Ribosomal_bS16_CS"/>
</dbReference>
<dbReference type="InterPro" id="IPR023803">
    <property type="entry name" value="Ribosomal_bS16_dom_sf"/>
</dbReference>
<dbReference type="NCBIfam" id="TIGR00002">
    <property type="entry name" value="S16"/>
    <property type="match status" value="1"/>
</dbReference>
<dbReference type="PANTHER" id="PTHR12919">
    <property type="entry name" value="30S RIBOSOMAL PROTEIN S16"/>
    <property type="match status" value="1"/>
</dbReference>
<dbReference type="PANTHER" id="PTHR12919:SF20">
    <property type="entry name" value="SMALL RIBOSOMAL SUBUNIT PROTEIN BS16M"/>
    <property type="match status" value="1"/>
</dbReference>
<dbReference type="Pfam" id="PF00886">
    <property type="entry name" value="Ribosomal_S16"/>
    <property type="match status" value="1"/>
</dbReference>
<dbReference type="SUPFAM" id="SSF54565">
    <property type="entry name" value="Ribosomal protein S16"/>
    <property type="match status" value="1"/>
</dbReference>
<dbReference type="PROSITE" id="PS00732">
    <property type="entry name" value="RIBOSOMAL_S16"/>
    <property type="match status" value="1"/>
</dbReference>
<proteinExistence type="inferred from homology"/>
<feature type="chain" id="PRO_1000049247" description="Small ribosomal subunit protein bS16">
    <location>
        <begin position="1"/>
        <end position="81"/>
    </location>
</feature>
<accession>A3DDH5</accession>
<sequence length="81" mass="9275">MAVKIRLKRMGAKKRPFYRVVVADSRYPRDGRFIEEIGTYNPLTEPSEIKIDTEKAQKWLKNGAQPTDTVRALLKKVGVIS</sequence>
<gene>
    <name evidence="1" type="primary">rpsP</name>
    <name type="ordered locus">Cthe_0769</name>
</gene>
<protein>
    <recommendedName>
        <fullName evidence="1">Small ribosomal subunit protein bS16</fullName>
    </recommendedName>
    <alternativeName>
        <fullName evidence="2">30S ribosomal protein S16</fullName>
    </alternativeName>
</protein>
<reference key="1">
    <citation type="submission" date="2007-02" db="EMBL/GenBank/DDBJ databases">
        <title>Complete sequence of Clostridium thermocellum ATCC 27405.</title>
        <authorList>
            <consortium name="US DOE Joint Genome Institute"/>
            <person name="Copeland A."/>
            <person name="Lucas S."/>
            <person name="Lapidus A."/>
            <person name="Barry K."/>
            <person name="Detter J.C."/>
            <person name="Glavina del Rio T."/>
            <person name="Hammon N."/>
            <person name="Israni S."/>
            <person name="Dalin E."/>
            <person name="Tice H."/>
            <person name="Pitluck S."/>
            <person name="Chertkov O."/>
            <person name="Brettin T."/>
            <person name="Bruce D."/>
            <person name="Han C."/>
            <person name="Tapia R."/>
            <person name="Gilna P."/>
            <person name="Schmutz J."/>
            <person name="Larimer F."/>
            <person name="Land M."/>
            <person name="Hauser L."/>
            <person name="Kyrpides N."/>
            <person name="Mikhailova N."/>
            <person name="Wu J.H.D."/>
            <person name="Newcomb M."/>
            <person name="Richardson P."/>
        </authorList>
    </citation>
    <scope>NUCLEOTIDE SEQUENCE [LARGE SCALE GENOMIC DNA]</scope>
    <source>
        <strain>ATCC 27405 / DSM 1237 / JCM 9322 / NBRC 103400 / NCIMB 10682 / NRRL B-4536 / VPI 7372</strain>
    </source>
</reference>
<keyword id="KW-1185">Reference proteome</keyword>
<keyword id="KW-0687">Ribonucleoprotein</keyword>
<keyword id="KW-0689">Ribosomal protein</keyword>
<comment type="similarity">
    <text evidence="1">Belongs to the bacterial ribosomal protein bS16 family.</text>
</comment>
<name>RS16_ACET2</name>